<reference key="1">
    <citation type="journal article" date="1999" name="Nature">
        <title>Sequence and analysis of chromosome 4 of the plant Arabidopsis thaliana.</title>
        <authorList>
            <person name="Mayer K.F.X."/>
            <person name="Schueller C."/>
            <person name="Wambutt R."/>
            <person name="Murphy G."/>
            <person name="Volckaert G."/>
            <person name="Pohl T."/>
            <person name="Duesterhoeft A."/>
            <person name="Stiekema W."/>
            <person name="Entian K.-D."/>
            <person name="Terryn N."/>
            <person name="Harris B."/>
            <person name="Ansorge W."/>
            <person name="Brandt P."/>
            <person name="Grivell L.A."/>
            <person name="Rieger M."/>
            <person name="Weichselgartner M."/>
            <person name="de Simone V."/>
            <person name="Obermaier B."/>
            <person name="Mache R."/>
            <person name="Mueller M."/>
            <person name="Kreis M."/>
            <person name="Delseny M."/>
            <person name="Puigdomenech P."/>
            <person name="Watson M."/>
            <person name="Schmidtheini T."/>
            <person name="Reichert B."/>
            <person name="Portetelle D."/>
            <person name="Perez-Alonso M."/>
            <person name="Boutry M."/>
            <person name="Bancroft I."/>
            <person name="Vos P."/>
            <person name="Hoheisel J."/>
            <person name="Zimmermann W."/>
            <person name="Wedler H."/>
            <person name="Ridley P."/>
            <person name="Langham S.-A."/>
            <person name="McCullagh B."/>
            <person name="Bilham L."/>
            <person name="Robben J."/>
            <person name="van der Schueren J."/>
            <person name="Grymonprez B."/>
            <person name="Chuang Y.-J."/>
            <person name="Vandenbussche F."/>
            <person name="Braeken M."/>
            <person name="Weltjens I."/>
            <person name="Voet M."/>
            <person name="Bastiaens I."/>
            <person name="Aert R."/>
            <person name="Defoor E."/>
            <person name="Weitzenegger T."/>
            <person name="Bothe G."/>
            <person name="Ramsperger U."/>
            <person name="Hilbert H."/>
            <person name="Braun M."/>
            <person name="Holzer E."/>
            <person name="Brandt A."/>
            <person name="Peters S."/>
            <person name="van Staveren M."/>
            <person name="Dirkse W."/>
            <person name="Mooijman P."/>
            <person name="Klein Lankhorst R."/>
            <person name="Rose M."/>
            <person name="Hauf J."/>
            <person name="Koetter P."/>
            <person name="Berneiser S."/>
            <person name="Hempel S."/>
            <person name="Feldpausch M."/>
            <person name="Lamberth S."/>
            <person name="Van den Daele H."/>
            <person name="De Keyser A."/>
            <person name="Buysshaert C."/>
            <person name="Gielen J."/>
            <person name="Villarroel R."/>
            <person name="De Clercq R."/>
            <person name="van Montagu M."/>
            <person name="Rogers J."/>
            <person name="Cronin A."/>
            <person name="Quail M.A."/>
            <person name="Bray-Allen S."/>
            <person name="Clark L."/>
            <person name="Doggett J."/>
            <person name="Hall S."/>
            <person name="Kay M."/>
            <person name="Lennard N."/>
            <person name="McLay K."/>
            <person name="Mayes R."/>
            <person name="Pettett A."/>
            <person name="Rajandream M.A."/>
            <person name="Lyne M."/>
            <person name="Benes V."/>
            <person name="Rechmann S."/>
            <person name="Borkova D."/>
            <person name="Bloecker H."/>
            <person name="Scharfe M."/>
            <person name="Grimm M."/>
            <person name="Loehnert T.-H."/>
            <person name="Dose S."/>
            <person name="de Haan M."/>
            <person name="Maarse A.C."/>
            <person name="Schaefer M."/>
            <person name="Mueller-Auer S."/>
            <person name="Gabel C."/>
            <person name="Fuchs M."/>
            <person name="Fartmann B."/>
            <person name="Granderath K."/>
            <person name="Dauner D."/>
            <person name="Herzl A."/>
            <person name="Neumann S."/>
            <person name="Argiriou A."/>
            <person name="Vitale D."/>
            <person name="Liguori R."/>
            <person name="Piravandi E."/>
            <person name="Massenet O."/>
            <person name="Quigley F."/>
            <person name="Clabauld G."/>
            <person name="Muendlein A."/>
            <person name="Felber R."/>
            <person name="Schnabl S."/>
            <person name="Hiller R."/>
            <person name="Schmidt W."/>
            <person name="Lecharny A."/>
            <person name="Aubourg S."/>
            <person name="Chefdor F."/>
            <person name="Cooke R."/>
            <person name="Berger C."/>
            <person name="Monfort A."/>
            <person name="Casacuberta E."/>
            <person name="Gibbons T."/>
            <person name="Weber N."/>
            <person name="Vandenbol M."/>
            <person name="Bargues M."/>
            <person name="Terol J."/>
            <person name="Torres A."/>
            <person name="Perez-Perez A."/>
            <person name="Purnelle B."/>
            <person name="Bent E."/>
            <person name="Johnson S."/>
            <person name="Tacon D."/>
            <person name="Jesse T."/>
            <person name="Heijnen L."/>
            <person name="Schwarz S."/>
            <person name="Scholler P."/>
            <person name="Heber S."/>
            <person name="Francs P."/>
            <person name="Bielke C."/>
            <person name="Frishman D."/>
            <person name="Haase D."/>
            <person name="Lemcke K."/>
            <person name="Mewes H.-W."/>
            <person name="Stocker S."/>
            <person name="Zaccaria P."/>
            <person name="Bevan M."/>
            <person name="Wilson R.K."/>
            <person name="de la Bastide M."/>
            <person name="Habermann K."/>
            <person name="Parnell L."/>
            <person name="Dedhia N."/>
            <person name="Gnoj L."/>
            <person name="Schutz K."/>
            <person name="Huang E."/>
            <person name="Spiegel L."/>
            <person name="Sekhon M."/>
            <person name="Murray J."/>
            <person name="Sheet P."/>
            <person name="Cordes M."/>
            <person name="Abu-Threideh J."/>
            <person name="Stoneking T."/>
            <person name="Kalicki J."/>
            <person name="Graves T."/>
            <person name="Harmon G."/>
            <person name="Edwards J."/>
            <person name="Latreille P."/>
            <person name="Courtney L."/>
            <person name="Cloud J."/>
            <person name="Abbott A."/>
            <person name="Scott K."/>
            <person name="Johnson D."/>
            <person name="Minx P."/>
            <person name="Bentley D."/>
            <person name="Fulton B."/>
            <person name="Miller N."/>
            <person name="Greco T."/>
            <person name="Kemp K."/>
            <person name="Kramer J."/>
            <person name="Fulton L."/>
            <person name="Mardis E."/>
            <person name="Dante M."/>
            <person name="Pepin K."/>
            <person name="Hillier L.W."/>
            <person name="Nelson J."/>
            <person name="Spieth J."/>
            <person name="Ryan E."/>
            <person name="Andrews S."/>
            <person name="Geisel C."/>
            <person name="Layman D."/>
            <person name="Du H."/>
            <person name="Ali J."/>
            <person name="Berghoff A."/>
            <person name="Jones K."/>
            <person name="Drone K."/>
            <person name="Cotton M."/>
            <person name="Joshu C."/>
            <person name="Antonoiu B."/>
            <person name="Zidanic M."/>
            <person name="Strong C."/>
            <person name="Sun H."/>
            <person name="Lamar B."/>
            <person name="Yordan C."/>
            <person name="Ma P."/>
            <person name="Zhong J."/>
            <person name="Preston R."/>
            <person name="Vil D."/>
            <person name="Shekher M."/>
            <person name="Matero A."/>
            <person name="Shah R."/>
            <person name="Swaby I.K."/>
            <person name="O'Shaughnessy A."/>
            <person name="Rodriguez M."/>
            <person name="Hoffman J."/>
            <person name="Till S."/>
            <person name="Granat S."/>
            <person name="Shohdy N."/>
            <person name="Hasegawa A."/>
            <person name="Hameed A."/>
            <person name="Lodhi M."/>
            <person name="Johnson A."/>
            <person name="Chen E."/>
            <person name="Marra M.A."/>
            <person name="Martienssen R."/>
            <person name="McCombie W.R."/>
        </authorList>
    </citation>
    <scope>NUCLEOTIDE SEQUENCE [LARGE SCALE GENOMIC DNA]</scope>
    <source>
        <strain>cv. Columbia</strain>
    </source>
</reference>
<reference key="2">
    <citation type="journal article" date="2017" name="Plant J.">
        <title>Araport11: a complete reannotation of the Arabidopsis thaliana reference genome.</title>
        <authorList>
            <person name="Cheng C.Y."/>
            <person name="Krishnakumar V."/>
            <person name="Chan A.P."/>
            <person name="Thibaud-Nissen F."/>
            <person name="Schobel S."/>
            <person name="Town C.D."/>
        </authorList>
    </citation>
    <scope>GENOME REANNOTATION</scope>
    <source>
        <strain>cv. Columbia</strain>
    </source>
</reference>
<reference key="3">
    <citation type="journal article" date="2006" name="Plant Biotechnol. J.">
        <title>Simultaneous high-throughput recombinational cloning of open reading frames in closed and open configurations.</title>
        <authorList>
            <person name="Underwood B.A."/>
            <person name="Vanderhaeghen R."/>
            <person name="Whitford R."/>
            <person name="Town C.D."/>
            <person name="Hilson P."/>
        </authorList>
    </citation>
    <scope>NUCLEOTIDE SEQUENCE [LARGE SCALE MRNA] (ISOFORM 2)</scope>
    <source>
        <strain>cv. Columbia</strain>
    </source>
</reference>
<reference key="4">
    <citation type="journal article" date="2005" name="PLoS Comput. Biol.">
        <title>Inferring hypotheses on functional relationships of genes: Analysis of the Arabidopsis thaliana subtilase gene family.</title>
        <authorList>
            <person name="Rautengarten C."/>
            <person name="Steinhauser D."/>
            <person name="Bussis D."/>
            <person name="Stintzi A."/>
            <person name="Schaller A."/>
            <person name="Kopka J."/>
            <person name="Altmann T."/>
        </authorList>
    </citation>
    <scope>GENE FAMILY</scope>
    <scope>NOMENCLATURE</scope>
</reference>
<sequence>MENSFLSSKLVFLLAIALVLFLNTELSFLTAEGASDSNSKVYIVYLGQREHDDPELLTASHHQMLESLLQSKEDAHNSMIYSYQHGFSGFAALLTSSQAKKISEHPEVIHVIPNRILKLKTTRIWDHLGLSPIPTSFSSSSSAKAKGLLHNTSMGSEAIIGVVDSGIWPESKVFNDQGLGPIPKRWRGKCRSGEKFNATMHCNKKLIGAKYYQSGLLAMNGGKFNRIIIRDFKSNRDATGHGTHTATIAGGSFVPNASFYGLARGTVRGGAPRARIASYKACWNVVGWGGICSSADMWKAYDDAIHDQVDVLSVSIGASIPEDSERVDFIAAFHAVAKGITVVAAAGNDGSGAQTICNVAPWLLTVAATTLDRSFPTKITLGNNQTFFVSNLAESLFTGPEISTGLAFLDDDVDVKGKTILEFDSTHPSSIAGRGVVAVILAKKPDDRPAPDNSYIFTDYEIGTHILQYIRTTRSPTVRISAATTLTGQPATPKVAAFSSRGPNSVSPAILKPDIAAPGVSILAAVSPLDPGAFNGFKLHSGTSMSTPVVSGIIVLLKSLHPKWSPAAMRSALVTTAWRTSPSGEPIFAQGSNKKLADPFDYGGGLVNPEKAAKPGLVYDMGIKDYINYMCSAGYNDSSISRVLGKKTKCPIPKPSMLDINLPSITIPNLEKEVTLTRTVTNVGPIKSVYRAVIESPLGITLTVNPTILVFKSAAKRVLTFSVKAKTSHKVNSGYFFGSLTWTDGVHDVTIPVSVKTTISM</sequence>
<proteinExistence type="evidence at transcript level"/>
<evidence type="ECO:0000250" key="1">
    <source>
        <dbReference type="UniProtKB" id="Q39547"/>
    </source>
</evidence>
<evidence type="ECO:0000250" key="2">
    <source>
        <dbReference type="UniProtKB" id="Q84WS0"/>
    </source>
</evidence>
<evidence type="ECO:0000255" key="3"/>
<evidence type="ECO:0000255" key="4">
    <source>
        <dbReference type="PROSITE-ProRule" id="PRU00498"/>
    </source>
</evidence>
<evidence type="ECO:0000255" key="5">
    <source>
        <dbReference type="PROSITE-ProRule" id="PRU01240"/>
    </source>
</evidence>
<evidence type="ECO:0000255" key="6">
    <source>
        <dbReference type="PROSITE-ProRule" id="PRU10082"/>
    </source>
</evidence>
<evidence type="ECO:0000303" key="7">
    <source>
    </source>
</evidence>
<evidence type="ECO:0000305" key="8"/>
<evidence type="ECO:0000312" key="9">
    <source>
        <dbReference type="Araport" id="AT4G21640"/>
    </source>
</evidence>
<evidence type="ECO:0000312" key="10">
    <source>
        <dbReference type="EMBL" id="CAB81271.1"/>
    </source>
</evidence>
<evidence type="ECO:0000312" key="11">
    <source>
        <dbReference type="Proteomes" id="UP000006548"/>
    </source>
</evidence>
<accession>F4JJL8</accession>
<accession>Q1PE61</accession>
<accession>Q9SVT3</accession>
<gene>
    <name evidence="7" type="primary">SBT3.15</name>
    <name evidence="9" type="ordered locus">At4g21640</name>
    <name evidence="10" type="ORF">F17L22.100</name>
</gene>
<feature type="signal peptide" evidence="3">
    <location>
        <begin position="1"/>
        <end position="21"/>
    </location>
</feature>
<feature type="propeptide" id="PRO_0000435214" description="Activation peptide" evidence="1">
    <location>
        <begin position="22"/>
        <end position="120"/>
    </location>
</feature>
<feature type="chain" id="PRO_5003316476" description="Subtilisin-like protease SBT3.15">
    <location>
        <begin position="121"/>
        <end status="unknown"/>
    </location>
</feature>
<feature type="propeptide" id="PRO_0000435215" evidence="1">
    <location>
        <begin status="unknown"/>
        <end position="761"/>
    </location>
</feature>
<feature type="domain" description="Inhibitor I9" evidence="3">
    <location>
        <begin position="41"/>
        <end position="119"/>
    </location>
</feature>
<feature type="domain" description="Peptidase S8" evidence="5">
    <location>
        <begin position="134"/>
        <end position="613"/>
    </location>
</feature>
<feature type="active site" description="Charge relay system" evidence="5">
    <location>
        <position position="164"/>
    </location>
</feature>
<feature type="active site" description="Charge relay system" evidence="5">
    <location>
        <position position="241"/>
    </location>
</feature>
<feature type="active site" description="Charge relay system" evidence="5">
    <location>
        <position position="544"/>
    </location>
</feature>
<feature type="glycosylation site" description="N-linked (GlcNAc...) asparagine" evidence="4">
    <location>
        <position position="151"/>
    </location>
</feature>
<feature type="glycosylation site" description="N-linked (GlcNAc...) asparagine" evidence="4">
    <location>
        <position position="197"/>
    </location>
</feature>
<feature type="glycosylation site" description="N-linked (GlcNAc...) asparagine" evidence="4">
    <location>
        <position position="256"/>
    </location>
</feature>
<feature type="glycosylation site" description="N-linked (GlcNAc...) asparagine" evidence="4">
    <location>
        <position position="384"/>
    </location>
</feature>
<feature type="glycosylation site" description="N-linked (GlcNAc...) asparagine" evidence="4">
    <location>
        <position position="636"/>
    </location>
</feature>
<feature type="splice variant" id="VSP_058030" description="In isoform 2.">
    <original>KAY</original>
    <variation>NGL</variation>
    <location>
        <begin position="299"/>
        <end position="301"/>
    </location>
</feature>
<feature type="splice variant" id="VSP_058031" description="In isoform 2.">
    <location>
        <begin position="302"/>
        <end position="761"/>
    </location>
</feature>
<protein>
    <recommendedName>
        <fullName evidence="7">Subtilisin-like protease SBT3.15</fullName>
        <ecNumber evidence="6">3.4.21.-</ecNumber>
    </recommendedName>
    <alternativeName>
        <fullName evidence="7">Subtilase subfamily 3 member 15</fullName>
        <shortName evidence="7">AtSBT3.15</shortName>
    </alternativeName>
</protein>
<comment type="subcellular location">
    <subcellularLocation>
        <location evidence="2">Secreted</location>
    </subcellularLocation>
</comment>
<comment type="alternative products">
    <event type="alternative splicing"/>
    <isoform>
        <id>F4JJL8-1</id>
        <name>1</name>
        <sequence type="displayed"/>
    </isoform>
    <isoform>
        <id>F4JJL8-2</id>
        <name>2</name>
        <sequence type="described" ref="VSP_058030 VSP_058031"/>
    </isoform>
</comment>
<comment type="similarity">
    <text evidence="8">Belongs to the peptidase S8 family.</text>
</comment>
<comment type="sequence caution" evidence="8">
    <conflict type="erroneous gene model prediction">
        <sequence resource="EMBL-CDS" id="AEE84484"/>
    </conflict>
</comment>
<comment type="sequence caution" evidence="8">
    <conflict type="erroneous gene model prediction">
        <sequence resource="EMBL-CDS" id="CAB36808"/>
    </conflict>
</comment>
<comment type="sequence caution" evidence="8">
    <conflict type="erroneous gene model prediction">
        <sequence resource="EMBL-CDS" id="CAB81271"/>
    </conflict>
</comment>
<name>SBT3F_ARATH</name>
<organism evidence="11">
    <name type="scientific">Arabidopsis thaliana</name>
    <name type="common">Mouse-ear cress</name>
    <dbReference type="NCBI Taxonomy" id="3702"/>
    <lineage>
        <taxon>Eukaryota</taxon>
        <taxon>Viridiplantae</taxon>
        <taxon>Streptophyta</taxon>
        <taxon>Embryophyta</taxon>
        <taxon>Tracheophyta</taxon>
        <taxon>Spermatophyta</taxon>
        <taxon>Magnoliopsida</taxon>
        <taxon>eudicotyledons</taxon>
        <taxon>Gunneridae</taxon>
        <taxon>Pentapetalae</taxon>
        <taxon>rosids</taxon>
        <taxon>malvids</taxon>
        <taxon>Brassicales</taxon>
        <taxon>Brassicaceae</taxon>
        <taxon>Camelineae</taxon>
        <taxon>Arabidopsis</taxon>
    </lineage>
</organism>
<dbReference type="EC" id="3.4.21.-" evidence="6"/>
<dbReference type="EMBL" id="AL035527">
    <property type="protein sequence ID" value="CAB36808.1"/>
    <property type="status" value="ALT_SEQ"/>
    <property type="molecule type" value="Genomic_DNA"/>
</dbReference>
<dbReference type="EMBL" id="AL161555">
    <property type="protein sequence ID" value="CAB81271.1"/>
    <property type="status" value="ALT_SEQ"/>
    <property type="molecule type" value="Genomic_DNA"/>
</dbReference>
<dbReference type="EMBL" id="CP002687">
    <property type="protein sequence ID" value="AEE84484.1"/>
    <property type="status" value="ALT_SEQ"/>
    <property type="molecule type" value="Genomic_DNA"/>
</dbReference>
<dbReference type="EMBL" id="DQ446857">
    <property type="protein sequence ID" value="ABE66081.1"/>
    <property type="molecule type" value="mRNA"/>
</dbReference>
<dbReference type="PIR" id="T05839">
    <property type="entry name" value="T05839"/>
</dbReference>
<dbReference type="RefSeq" id="NP_193895.2">
    <property type="nucleotide sequence ID" value="NM_118284.2"/>
</dbReference>
<dbReference type="SMR" id="F4JJL8"/>
<dbReference type="FunCoup" id="F4JJL8">
    <property type="interactions" value="1"/>
</dbReference>
<dbReference type="MEROPS" id="S08.A42"/>
<dbReference type="GlyCosmos" id="F4JJL8">
    <property type="glycosylation" value="5 sites, No reported glycans"/>
</dbReference>
<dbReference type="GlyGen" id="F4JJL8">
    <property type="glycosylation" value="5 sites"/>
</dbReference>
<dbReference type="PaxDb" id="3702-AT4G21640.1"/>
<dbReference type="ProteomicsDB" id="232869">
    <molecule id="F4JJL8-1"/>
</dbReference>
<dbReference type="GeneID" id="828251"/>
<dbReference type="KEGG" id="ath:AT4G21640"/>
<dbReference type="Araport" id="AT4G21640"/>
<dbReference type="TAIR" id="AT4G21640"/>
<dbReference type="eggNOG" id="ENOG502QSF0">
    <property type="taxonomic scope" value="Eukaryota"/>
</dbReference>
<dbReference type="HOGENOM" id="CLU_000625_4_2_1"/>
<dbReference type="InParanoid" id="F4JJL8"/>
<dbReference type="PRO" id="PR:F4JJL8"/>
<dbReference type="Proteomes" id="UP000006548">
    <property type="component" value="Chromosome 4"/>
</dbReference>
<dbReference type="ExpressionAtlas" id="F4JJL8">
    <property type="expression patterns" value="baseline and differential"/>
</dbReference>
<dbReference type="GO" id="GO:0005829">
    <property type="term" value="C:cytosol"/>
    <property type="evidence" value="ECO:0007005"/>
    <property type="project" value="TAIR"/>
</dbReference>
<dbReference type="GO" id="GO:0005615">
    <property type="term" value="C:extracellular space"/>
    <property type="evidence" value="ECO:0000318"/>
    <property type="project" value="GO_Central"/>
</dbReference>
<dbReference type="GO" id="GO:0004252">
    <property type="term" value="F:serine-type endopeptidase activity"/>
    <property type="evidence" value="ECO:0000318"/>
    <property type="project" value="GO_Central"/>
</dbReference>
<dbReference type="GO" id="GO:0006508">
    <property type="term" value="P:proteolysis"/>
    <property type="evidence" value="ECO:0007669"/>
    <property type="project" value="UniProtKB-KW"/>
</dbReference>
<dbReference type="CDD" id="cd02120">
    <property type="entry name" value="PA_subtilisin_like"/>
    <property type="match status" value="1"/>
</dbReference>
<dbReference type="CDD" id="cd04852">
    <property type="entry name" value="Peptidases_S8_3"/>
    <property type="match status" value="1"/>
</dbReference>
<dbReference type="FunFam" id="2.60.40.2310:FF:000001">
    <property type="entry name" value="Subtilisin-like protease SBT1.5"/>
    <property type="match status" value="1"/>
</dbReference>
<dbReference type="FunFam" id="3.40.50.200:FF:000006">
    <property type="entry name" value="Subtilisin-like protease SBT1.5"/>
    <property type="match status" value="1"/>
</dbReference>
<dbReference type="FunFam" id="3.30.70.80:FF:000002">
    <property type="entry name" value="Subtilisin-like protease SBT5.3"/>
    <property type="match status" value="1"/>
</dbReference>
<dbReference type="Gene3D" id="2.60.40.2310">
    <property type="match status" value="1"/>
</dbReference>
<dbReference type="Gene3D" id="3.50.30.30">
    <property type="match status" value="1"/>
</dbReference>
<dbReference type="Gene3D" id="3.30.70.80">
    <property type="entry name" value="Peptidase S8 propeptide/proteinase inhibitor I9"/>
    <property type="match status" value="1"/>
</dbReference>
<dbReference type="Gene3D" id="3.40.50.200">
    <property type="entry name" value="Peptidase S8/S53 domain"/>
    <property type="match status" value="1"/>
</dbReference>
<dbReference type="InterPro" id="IPR000209">
    <property type="entry name" value="Peptidase_S8/S53_dom"/>
</dbReference>
<dbReference type="InterPro" id="IPR036852">
    <property type="entry name" value="Peptidase_S8/S53_dom_sf"/>
</dbReference>
<dbReference type="InterPro" id="IPR023828">
    <property type="entry name" value="Peptidase_S8_Ser-AS"/>
</dbReference>
<dbReference type="InterPro" id="IPR015500">
    <property type="entry name" value="Peptidase_S8_subtilisin-rel"/>
</dbReference>
<dbReference type="InterPro" id="IPR034197">
    <property type="entry name" value="Peptidases_S8_3"/>
</dbReference>
<dbReference type="InterPro" id="IPR010259">
    <property type="entry name" value="S8pro/Inhibitor_I9"/>
</dbReference>
<dbReference type="InterPro" id="IPR037045">
    <property type="entry name" value="S8pro/Inhibitor_I9_sf"/>
</dbReference>
<dbReference type="InterPro" id="IPR045051">
    <property type="entry name" value="SBT"/>
</dbReference>
<dbReference type="InterPro" id="IPR041469">
    <property type="entry name" value="Subtilisin-like_FN3"/>
</dbReference>
<dbReference type="PANTHER" id="PTHR10795">
    <property type="entry name" value="PROPROTEIN CONVERTASE SUBTILISIN/KEXIN"/>
    <property type="match status" value="1"/>
</dbReference>
<dbReference type="Pfam" id="PF17766">
    <property type="entry name" value="fn3_6"/>
    <property type="match status" value="1"/>
</dbReference>
<dbReference type="Pfam" id="PF05922">
    <property type="entry name" value="Inhibitor_I9"/>
    <property type="match status" value="1"/>
</dbReference>
<dbReference type="Pfam" id="PF00082">
    <property type="entry name" value="Peptidase_S8"/>
    <property type="match status" value="1"/>
</dbReference>
<dbReference type="PRINTS" id="PR00723">
    <property type="entry name" value="SUBTILISIN"/>
</dbReference>
<dbReference type="SUPFAM" id="SSF52743">
    <property type="entry name" value="Subtilisin-like"/>
    <property type="match status" value="1"/>
</dbReference>
<dbReference type="PROSITE" id="PS51892">
    <property type="entry name" value="SUBTILASE"/>
    <property type="match status" value="1"/>
</dbReference>
<dbReference type="PROSITE" id="PS00138">
    <property type="entry name" value="SUBTILASE_SER"/>
    <property type="match status" value="1"/>
</dbReference>
<keyword id="KW-0025">Alternative splicing</keyword>
<keyword id="KW-0068">Autocatalytic cleavage</keyword>
<keyword id="KW-0325">Glycoprotein</keyword>
<keyword id="KW-0378">Hydrolase</keyword>
<keyword id="KW-0645">Protease</keyword>
<keyword id="KW-1185">Reference proteome</keyword>
<keyword id="KW-0964">Secreted</keyword>
<keyword id="KW-0720">Serine protease</keyword>
<keyword id="KW-0732">Signal</keyword>
<keyword id="KW-0865">Zymogen</keyword>